<name>ISPD_ECOSE</name>
<keyword id="KW-0414">Isoprene biosynthesis</keyword>
<keyword id="KW-0548">Nucleotidyltransferase</keyword>
<keyword id="KW-0808">Transferase</keyword>
<feature type="chain" id="PRO_1000094329" description="2-C-methyl-D-erythritol 4-phosphate cytidylyltransferase">
    <location>
        <begin position="1"/>
        <end position="236"/>
    </location>
</feature>
<feature type="site" description="Transition state stabilizer" evidence="1">
    <location>
        <position position="20"/>
    </location>
</feature>
<feature type="site" description="Transition state stabilizer" evidence="1">
    <location>
        <position position="27"/>
    </location>
</feature>
<feature type="site" description="Positions MEP for the nucleophilic attack" evidence="1">
    <location>
        <position position="157"/>
    </location>
</feature>
<feature type="site" description="Positions MEP for the nucleophilic attack" evidence="1">
    <location>
        <position position="213"/>
    </location>
</feature>
<protein>
    <recommendedName>
        <fullName evidence="1">2-C-methyl-D-erythritol 4-phosphate cytidylyltransferase</fullName>
        <ecNumber evidence="1">2.7.7.60</ecNumber>
    </recommendedName>
    <alternativeName>
        <fullName evidence="1">4-diphosphocytidyl-2C-methyl-D-erythritol synthase</fullName>
    </alternativeName>
    <alternativeName>
        <fullName evidence="1">MEP cytidylyltransferase</fullName>
        <shortName evidence="1">MCT</shortName>
    </alternativeName>
</protein>
<evidence type="ECO:0000255" key="1">
    <source>
        <dbReference type="HAMAP-Rule" id="MF_00108"/>
    </source>
</evidence>
<reference key="1">
    <citation type="journal article" date="2008" name="DNA Res.">
        <title>Complete genome sequence and comparative analysis of the wild-type commensal Escherichia coli strain SE11 isolated from a healthy adult.</title>
        <authorList>
            <person name="Oshima K."/>
            <person name="Toh H."/>
            <person name="Ogura Y."/>
            <person name="Sasamoto H."/>
            <person name="Morita H."/>
            <person name="Park S.-H."/>
            <person name="Ooka T."/>
            <person name="Iyoda S."/>
            <person name="Taylor T.D."/>
            <person name="Hayashi T."/>
            <person name="Itoh K."/>
            <person name="Hattori M."/>
        </authorList>
    </citation>
    <scope>NUCLEOTIDE SEQUENCE [LARGE SCALE GENOMIC DNA]</scope>
    <source>
        <strain>SE11</strain>
    </source>
</reference>
<dbReference type="EC" id="2.7.7.60" evidence="1"/>
<dbReference type="EMBL" id="AP009240">
    <property type="protein sequence ID" value="BAG78523.1"/>
    <property type="molecule type" value="Genomic_DNA"/>
</dbReference>
<dbReference type="RefSeq" id="WP_000246138.1">
    <property type="nucleotide sequence ID" value="NC_011415.1"/>
</dbReference>
<dbReference type="SMR" id="B6I6D7"/>
<dbReference type="GeneID" id="93779259"/>
<dbReference type="KEGG" id="ecy:ECSE_2999"/>
<dbReference type="HOGENOM" id="CLU_061281_3_1_6"/>
<dbReference type="UniPathway" id="UPA00056">
    <property type="reaction ID" value="UER00093"/>
</dbReference>
<dbReference type="Proteomes" id="UP000008199">
    <property type="component" value="Chromosome"/>
</dbReference>
<dbReference type="GO" id="GO:0050518">
    <property type="term" value="F:2-C-methyl-D-erythritol 4-phosphate cytidylyltransferase activity"/>
    <property type="evidence" value="ECO:0007669"/>
    <property type="project" value="UniProtKB-UniRule"/>
</dbReference>
<dbReference type="GO" id="GO:0019288">
    <property type="term" value="P:isopentenyl diphosphate biosynthetic process, methylerythritol 4-phosphate pathway"/>
    <property type="evidence" value="ECO:0007669"/>
    <property type="project" value="UniProtKB-UniRule"/>
</dbReference>
<dbReference type="CDD" id="cd02516">
    <property type="entry name" value="CDP-ME_synthetase"/>
    <property type="match status" value="1"/>
</dbReference>
<dbReference type="FunFam" id="3.90.550.10:FF:000003">
    <property type="entry name" value="2-C-methyl-D-erythritol 4-phosphate cytidylyltransferase"/>
    <property type="match status" value="1"/>
</dbReference>
<dbReference type="Gene3D" id="3.90.550.10">
    <property type="entry name" value="Spore Coat Polysaccharide Biosynthesis Protein SpsA, Chain A"/>
    <property type="match status" value="1"/>
</dbReference>
<dbReference type="HAMAP" id="MF_00108">
    <property type="entry name" value="IspD"/>
    <property type="match status" value="1"/>
</dbReference>
<dbReference type="InterPro" id="IPR001228">
    <property type="entry name" value="IspD"/>
</dbReference>
<dbReference type="InterPro" id="IPR034683">
    <property type="entry name" value="IspD/TarI"/>
</dbReference>
<dbReference type="InterPro" id="IPR050088">
    <property type="entry name" value="IspD/TarI_cytidylyltransf_bact"/>
</dbReference>
<dbReference type="InterPro" id="IPR018294">
    <property type="entry name" value="ISPD_synthase_CS"/>
</dbReference>
<dbReference type="InterPro" id="IPR029044">
    <property type="entry name" value="Nucleotide-diphossugar_trans"/>
</dbReference>
<dbReference type="NCBIfam" id="TIGR00453">
    <property type="entry name" value="ispD"/>
    <property type="match status" value="1"/>
</dbReference>
<dbReference type="PANTHER" id="PTHR32125">
    <property type="entry name" value="2-C-METHYL-D-ERYTHRITOL 4-PHOSPHATE CYTIDYLYLTRANSFERASE, CHLOROPLASTIC"/>
    <property type="match status" value="1"/>
</dbReference>
<dbReference type="PANTHER" id="PTHR32125:SF4">
    <property type="entry name" value="2-C-METHYL-D-ERYTHRITOL 4-PHOSPHATE CYTIDYLYLTRANSFERASE, CHLOROPLASTIC"/>
    <property type="match status" value="1"/>
</dbReference>
<dbReference type="Pfam" id="PF01128">
    <property type="entry name" value="IspD"/>
    <property type="match status" value="1"/>
</dbReference>
<dbReference type="SUPFAM" id="SSF53448">
    <property type="entry name" value="Nucleotide-diphospho-sugar transferases"/>
    <property type="match status" value="1"/>
</dbReference>
<dbReference type="PROSITE" id="PS01295">
    <property type="entry name" value="ISPD"/>
    <property type="match status" value="1"/>
</dbReference>
<organism>
    <name type="scientific">Escherichia coli (strain SE11)</name>
    <dbReference type="NCBI Taxonomy" id="409438"/>
    <lineage>
        <taxon>Bacteria</taxon>
        <taxon>Pseudomonadati</taxon>
        <taxon>Pseudomonadota</taxon>
        <taxon>Gammaproteobacteria</taxon>
        <taxon>Enterobacterales</taxon>
        <taxon>Enterobacteriaceae</taxon>
        <taxon>Escherichia</taxon>
    </lineage>
</organism>
<sequence length="236" mass="25737">MATTHLDVCAVVPAAGFGRRMQTECPKQYLSIGNQTILEHSVHALLAHPRVKRVVIAISPGDSRFAQLPLANHPQITVVDGGDERADSVLAGLKAAGDAQWVLVHDAARPCLHQDDLARLLALSETSRTGGILAAPVRDTMKRAEPGKNAIAHTVDRNGLWHALTPQFFPRELLHDCLTRALNEGATITDEASALEYCGFHPQLVEGRADNIKVTRPEDLALAEFYLTRTIHQENT</sequence>
<proteinExistence type="inferred from homology"/>
<gene>
    <name evidence="1" type="primary">ispD</name>
    <name type="ordered locus">ECSE_2999</name>
</gene>
<comment type="function">
    <text evidence="1">Catalyzes the formation of 4-diphosphocytidyl-2-C-methyl-D-erythritol from CTP and 2-C-methyl-D-erythritol 4-phosphate (MEP).</text>
</comment>
<comment type="catalytic activity">
    <reaction evidence="1">
        <text>2-C-methyl-D-erythritol 4-phosphate + CTP + H(+) = 4-CDP-2-C-methyl-D-erythritol + diphosphate</text>
        <dbReference type="Rhea" id="RHEA:13429"/>
        <dbReference type="ChEBI" id="CHEBI:15378"/>
        <dbReference type="ChEBI" id="CHEBI:33019"/>
        <dbReference type="ChEBI" id="CHEBI:37563"/>
        <dbReference type="ChEBI" id="CHEBI:57823"/>
        <dbReference type="ChEBI" id="CHEBI:58262"/>
        <dbReference type="EC" id="2.7.7.60"/>
    </reaction>
</comment>
<comment type="pathway">
    <text evidence="1">Isoprenoid biosynthesis; isopentenyl diphosphate biosynthesis via DXP pathway; isopentenyl diphosphate from 1-deoxy-D-xylulose 5-phosphate: step 2/6.</text>
</comment>
<comment type="subunit">
    <text evidence="1">Homodimer.</text>
</comment>
<comment type="similarity">
    <text evidence="1">Belongs to the IspD/TarI cytidylyltransferase family. IspD subfamily.</text>
</comment>
<accession>B6I6D7</accession>